<accession>P59325</accession>
<feature type="chain" id="PRO_0000212517" description="Eukaryotic translation initiation factor 5">
    <location>
        <begin position="1"/>
        <end position="429"/>
    </location>
</feature>
<feature type="domain" description="W2" evidence="3">
    <location>
        <begin position="231"/>
        <end position="390"/>
    </location>
</feature>
<feature type="region of interest" description="Disordered" evidence="4">
    <location>
        <begin position="143"/>
        <end position="216"/>
    </location>
</feature>
<feature type="compositionally biased region" description="Basic and acidic residues" evidence="4">
    <location>
        <begin position="153"/>
        <end position="170"/>
    </location>
</feature>
<feature type="compositionally biased region" description="Pro residues" evidence="4">
    <location>
        <begin position="178"/>
        <end position="187"/>
    </location>
</feature>
<feature type="compositionally biased region" description="Acidic residues" evidence="4">
    <location>
        <begin position="194"/>
        <end position="207"/>
    </location>
</feature>
<feature type="binding site" evidence="2">
    <location>
        <begin position="27"/>
        <end position="34"/>
    </location>
    <ligand>
        <name>GTP</name>
        <dbReference type="ChEBI" id="CHEBI:37565"/>
    </ligand>
</feature>
<feature type="site" description="Arginine finger" evidence="1">
    <location>
        <position position="15"/>
    </location>
</feature>
<feature type="modified residue" description="Phosphoserine" evidence="1">
    <location>
        <position position="10"/>
    </location>
</feature>
<feature type="modified residue" description="Phosphothreonine" evidence="1">
    <location>
        <position position="225"/>
    </location>
</feature>
<feature type="modified residue" description="Phosphoserine" evidence="7">
    <location>
        <position position="227"/>
    </location>
</feature>
<feature type="modified residue" description="Phosphoserine" evidence="6 7">
    <location>
        <position position="387"/>
    </location>
</feature>
<feature type="modified residue" description="Phosphoserine" evidence="6 7">
    <location>
        <position position="388"/>
    </location>
</feature>
<feature type="modified residue" description="Phosphoserine" evidence="1">
    <location>
        <position position="408"/>
    </location>
</feature>
<feature type="modified residue" description="Phosphoserine" evidence="6">
    <location>
        <position position="417"/>
    </location>
</feature>
<feature type="cross-link" description="Glycyl lysine isopeptide (Lys-Gly) (interchain with G-Cter in SUMO2)" evidence="1">
    <location>
        <position position="411"/>
    </location>
</feature>
<feature type="cross-link" description="Glycyl lysine isopeptide (Lys-Gly) (interchain with G-Cter in SUMO2)" evidence="1">
    <location>
        <position position="416"/>
    </location>
</feature>
<gene>
    <name type="primary">Eif5</name>
</gene>
<dbReference type="EMBL" id="BC039275">
    <property type="protein sequence ID" value="AAH39275.1"/>
    <property type="molecule type" value="mRNA"/>
</dbReference>
<dbReference type="EMBL" id="BC042622">
    <property type="status" value="NOT_ANNOTATED_CDS"/>
    <property type="molecule type" value="mRNA"/>
</dbReference>
<dbReference type="CCDS" id="CCDS26180.1"/>
<dbReference type="RefSeq" id="NP_775539.1">
    <property type="nucleotide sequence ID" value="NM_173363.6"/>
</dbReference>
<dbReference type="RefSeq" id="NP_829887.1">
    <property type="nucleotide sequence ID" value="NM_178041.2"/>
</dbReference>
<dbReference type="BMRB" id="P59325"/>
<dbReference type="SMR" id="P59325"/>
<dbReference type="BioGRID" id="229973">
    <property type="interactions" value="37"/>
</dbReference>
<dbReference type="FunCoup" id="P59325">
    <property type="interactions" value="3651"/>
</dbReference>
<dbReference type="IntAct" id="P59325">
    <property type="interactions" value="3"/>
</dbReference>
<dbReference type="MINT" id="P59325"/>
<dbReference type="STRING" id="10090.ENSMUSP00000126825"/>
<dbReference type="CarbonylDB" id="P59325"/>
<dbReference type="GlyGen" id="P59325">
    <property type="glycosylation" value="2 sites, 1 N-linked glycan (1 site), 1 O-linked glycan (1 site)"/>
</dbReference>
<dbReference type="iPTMnet" id="P59325"/>
<dbReference type="MetOSite" id="P59325"/>
<dbReference type="PhosphoSitePlus" id="P59325"/>
<dbReference type="SwissPalm" id="P59325"/>
<dbReference type="jPOST" id="P59325"/>
<dbReference type="PaxDb" id="10090-ENSMUSP00000126825"/>
<dbReference type="PeptideAtlas" id="P59325"/>
<dbReference type="ProteomicsDB" id="269379"/>
<dbReference type="Pumba" id="P59325"/>
<dbReference type="Antibodypedia" id="47">
    <property type="antibodies" value="265 antibodies from 34 providers"/>
</dbReference>
<dbReference type="DNASU" id="217869"/>
<dbReference type="Ensembl" id="ENSMUST00000050993.11">
    <property type="protein sequence ID" value="ENSMUSP00000061616.10"/>
    <property type="gene ID" value="ENSMUSG00000021282.18"/>
</dbReference>
<dbReference type="Ensembl" id="ENSMUST00000166123.9">
    <property type="protein sequence ID" value="ENSMUSP00000126825.2"/>
    <property type="gene ID" value="ENSMUSG00000021282.18"/>
</dbReference>
<dbReference type="Ensembl" id="ENSMUST00000222375.2">
    <property type="protein sequence ID" value="ENSMUSP00000152791.2"/>
    <property type="gene ID" value="ENSMUSG00000021282.18"/>
</dbReference>
<dbReference type="GeneID" id="217869"/>
<dbReference type="KEGG" id="mmu:217869"/>
<dbReference type="UCSC" id="uc007pdd.2">
    <property type="organism name" value="mouse"/>
</dbReference>
<dbReference type="AGR" id="MGI:95309"/>
<dbReference type="CTD" id="1983"/>
<dbReference type="MGI" id="MGI:95309">
    <property type="gene designation" value="Eif5"/>
</dbReference>
<dbReference type="VEuPathDB" id="HostDB:ENSMUSG00000021282"/>
<dbReference type="eggNOG" id="KOG2767">
    <property type="taxonomic scope" value="Eukaryota"/>
</dbReference>
<dbReference type="GeneTree" id="ENSGT00390000016478"/>
<dbReference type="HOGENOM" id="CLU_026663_1_0_1"/>
<dbReference type="InParanoid" id="P59325"/>
<dbReference type="OMA" id="YRYKMEK"/>
<dbReference type="OrthoDB" id="10250831at2759"/>
<dbReference type="PhylomeDB" id="P59325"/>
<dbReference type="TreeFam" id="TF101533"/>
<dbReference type="Reactome" id="R-MMU-72702">
    <property type="pathway name" value="Ribosomal scanning and start codon recognition"/>
</dbReference>
<dbReference type="Reactome" id="R-MMU-72706">
    <property type="pathway name" value="GTP hydrolysis and joining of the 60S ribosomal subunit"/>
</dbReference>
<dbReference type="BioGRID-ORCS" id="217869">
    <property type="hits" value="30 hits in 81 CRISPR screens"/>
</dbReference>
<dbReference type="ChiTaRS" id="Eif5">
    <property type="organism name" value="mouse"/>
</dbReference>
<dbReference type="PRO" id="PR:P59325"/>
<dbReference type="Proteomes" id="UP000000589">
    <property type="component" value="Chromosome 12"/>
</dbReference>
<dbReference type="RNAct" id="P59325">
    <property type="molecule type" value="protein"/>
</dbReference>
<dbReference type="Bgee" id="ENSMUSG00000021282">
    <property type="expression patterns" value="Expressed in otic placode and 265 other cell types or tissues"/>
</dbReference>
<dbReference type="ExpressionAtlas" id="P59325">
    <property type="expression patterns" value="baseline and differential"/>
</dbReference>
<dbReference type="GO" id="GO:0005829">
    <property type="term" value="C:cytosol"/>
    <property type="evidence" value="ECO:0007669"/>
    <property type="project" value="Ensembl"/>
</dbReference>
<dbReference type="GO" id="GO:0005886">
    <property type="term" value="C:plasma membrane"/>
    <property type="evidence" value="ECO:0007669"/>
    <property type="project" value="Ensembl"/>
</dbReference>
<dbReference type="GO" id="GO:0045202">
    <property type="term" value="C:synapse"/>
    <property type="evidence" value="ECO:0000314"/>
    <property type="project" value="SynGO"/>
</dbReference>
<dbReference type="GO" id="GO:0005525">
    <property type="term" value="F:GTP binding"/>
    <property type="evidence" value="ECO:0007669"/>
    <property type="project" value="UniProtKB-KW"/>
</dbReference>
<dbReference type="GO" id="GO:0005096">
    <property type="term" value="F:GTPase activator activity"/>
    <property type="evidence" value="ECO:0007669"/>
    <property type="project" value="UniProtKB-KW"/>
</dbReference>
<dbReference type="GO" id="GO:0003743">
    <property type="term" value="F:translation initiation factor activity"/>
    <property type="evidence" value="ECO:0007669"/>
    <property type="project" value="UniProtKB-KW"/>
</dbReference>
<dbReference type="GO" id="GO:0006446">
    <property type="term" value="P:regulation of translational initiation"/>
    <property type="evidence" value="ECO:0007669"/>
    <property type="project" value="Ensembl"/>
</dbReference>
<dbReference type="GO" id="GO:0042255">
    <property type="term" value="P:ribosome assembly"/>
    <property type="evidence" value="ECO:0007669"/>
    <property type="project" value="Ensembl"/>
</dbReference>
<dbReference type="CDD" id="cd11561">
    <property type="entry name" value="W2_eIF5"/>
    <property type="match status" value="1"/>
</dbReference>
<dbReference type="FunFam" id="2.20.25.350:FF:000002">
    <property type="entry name" value="Eukaryotic translation initiation factor 5"/>
    <property type="match status" value="1"/>
</dbReference>
<dbReference type="FunFam" id="3.30.30.170:FF:000002">
    <property type="entry name" value="Eukaryotic translation initiation factor 5"/>
    <property type="match status" value="1"/>
</dbReference>
<dbReference type="FunFam" id="1.25.40.180:FF:000018">
    <property type="entry name" value="eukaryotic translation initiation factor 5"/>
    <property type="match status" value="1"/>
</dbReference>
<dbReference type="Gene3D" id="1.25.40.180">
    <property type="match status" value="1"/>
</dbReference>
<dbReference type="Gene3D" id="2.20.25.350">
    <property type="match status" value="1"/>
</dbReference>
<dbReference type="Gene3D" id="3.30.30.170">
    <property type="match status" value="1"/>
</dbReference>
<dbReference type="InterPro" id="IPR016024">
    <property type="entry name" value="ARM-type_fold"/>
</dbReference>
<dbReference type="InterPro" id="IPR045196">
    <property type="entry name" value="IF2/IF5"/>
</dbReference>
<dbReference type="InterPro" id="IPR002735">
    <property type="entry name" value="Transl_init_fac_IF2/IF5_dom"/>
</dbReference>
<dbReference type="InterPro" id="IPR016189">
    <property type="entry name" value="Transl_init_fac_IF2/IF5_N"/>
</dbReference>
<dbReference type="InterPro" id="IPR016190">
    <property type="entry name" value="Transl_init_fac_IF2/IF5_Zn-bd"/>
</dbReference>
<dbReference type="InterPro" id="IPR003307">
    <property type="entry name" value="W2_domain"/>
</dbReference>
<dbReference type="PANTHER" id="PTHR23001">
    <property type="entry name" value="EUKARYOTIC TRANSLATION INITIATION FACTOR"/>
    <property type="match status" value="1"/>
</dbReference>
<dbReference type="PANTHER" id="PTHR23001:SF7">
    <property type="entry name" value="EUKARYOTIC TRANSLATION INITIATION FACTOR 5"/>
    <property type="match status" value="1"/>
</dbReference>
<dbReference type="Pfam" id="PF01873">
    <property type="entry name" value="eIF-5_eIF-2B"/>
    <property type="match status" value="1"/>
</dbReference>
<dbReference type="Pfam" id="PF02020">
    <property type="entry name" value="W2"/>
    <property type="match status" value="1"/>
</dbReference>
<dbReference type="SMART" id="SM00653">
    <property type="entry name" value="eIF2B_5"/>
    <property type="match status" value="1"/>
</dbReference>
<dbReference type="SMART" id="SM00515">
    <property type="entry name" value="eIF5C"/>
    <property type="match status" value="1"/>
</dbReference>
<dbReference type="SUPFAM" id="SSF48371">
    <property type="entry name" value="ARM repeat"/>
    <property type="match status" value="1"/>
</dbReference>
<dbReference type="SUPFAM" id="SSF100966">
    <property type="entry name" value="Translation initiation factor 2 beta, aIF2beta, N-terminal domain"/>
    <property type="match status" value="1"/>
</dbReference>
<dbReference type="SUPFAM" id="SSF75689">
    <property type="entry name" value="Zinc-binding domain of translation initiation factor 2 beta"/>
    <property type="match status" value="1"/>
</dbReference>
<dbReference type="PROSITE" id="PS51363">
    <property type="entry name" value="W2"/>
    <property type="match status" value="1"/>
</dbReference>
<comment type="function">
    <text evidence="1">Component of the 43S pre-initiation complex (43S PIC), which binds to the mRNA cap-proximal region, scans mRNA 5'-untranslated region, and locates the initiation codon. In this complex, acts as a GTPase-activating protein, by promoting GTP hydrolysis by eIF2G (EIF2S3). During scanning, interacts with both EIF1 (via its C-terminal domain (CTD)) and EIF1A (via its NTD). This interaction with EIF1A contributes to the maintenance of EIF1 within the open 43S PIC. When start codon is recognized, EIF5, via its NTD, induces eIF2G (EIF2S3) to hydrolyze the GTP. Start codon recognition also induces a conformational change of the PIC to a closed state. This change increases the affinity of EIF5-CTD for EIF2-beta (EIF2S2), which allows the release, by an indirect mechanism, of EIF1 from the PIC. Finally, EIF5 stabilizes the PIC in its closed conformation.</text>
</comment>
<comment type="subunit">
    <text evidence="1">Component of the 43S pre-initiation complex (43S PIC), which is composed of the 40S ribosomal subunit, EIF1, eIF1A (EIF1AX), eIF3 complex, EIF5 and eIF2-GTP-initiator tRNA complex (eIF2 ternary complex). Interacts with eIF1A (EIF1AX) during scanning. Interacts through its C-terminal domain (CTD) with EIF1 or with eIF2-beta (EIF2S2) (mutually exclusive) through a common binding site. Interacts through its C-terminal domain (CTD) with the CTD of EIF5B. Interacts with FMR1 isoform 6; this interaction occurs in a RNA-dependent manner.</text>
</comment>
<comment type="subcellular location">
    <subcellularLocation>
        <location evidence="5">Cytoplasm</location>
    </subcellularLocation>
</comment>
<comment type="similarity">
    <text evidence="5">Belongs to the eIF-2-beta/eIF-5 family.</text>
</comment>
<name>IF5_MOUSE</name>
<proteinExistence type="evidence at protein level"/>
<keyword id="KW-0963">Cytoplasm</keyword>
<keyword id="KW-0342">GTP-binding</keyword>
<keyword id="KW-0343">GTPase activation</keyword>
<keyword id="KW-0396">Initiation factor</keyword>
<keyword id="KW-1017">Isopeptide bond</keyword>
<keyword id="KW-0547">Nucleotide-binding</keyword>
<keyword id="KW-0597">Phosphoprotein</keyword>
<keyword id="KW-0648">Protein biosynthesis</keyword>
<keyword id="KW-1185">Reference proteome</keyword>
<keyword id="KW-0832">Ubl conjugation</keyword>
<protein>
    <recommendedName>
        <fullName>Eukaryotic translation initiation factor 5</fullName>
        <shortName>eIF-5</shortName>
    </recommendedName>
</protein>
<evidence type="ECO:0000250" key="1">
    <source>
        <dbReference type="UniProtKB" id="P55010"/>
    </source>
</evidence>
<evidence type="ECO:0000255" key="2"/>
<evidence type="ECO:0000255" key="3">
    <source>
        <dbReference type="PROSITE-ProRule" id="PRU00695"/>
    </source>
</evidence>
<evidence type="ECO:0000256" key="4">
    <source>
        <dbReference type="SAM" id="MobiDB-lite"/>
    </source>
</evidence>
<evidence type="ECO:0000305" key="5"/>
<evidence type="ECO:0007744" key="6">
    <source>
    </source>
</evidence>
<evidence type="ECO:0007744" key="7">
    <source>
    </source>
</evidence>
<sequence length="429" mass="48968">MSVNVNRSVSDQFYRYKMPRLIAKVEGKGNGIKTVIVNMVDVAKALNRPPTYPTKYFGCELGAQTQFDVKNDRYIVNGSHEANKLQDMLDGFIKKFVLCPECENPETDLHVNPKKQTIGNSCKACGYRGMLDTHHKLCTFILKNPPENSDIGTGKKEKEKKNRKGKDKENGSVSTSETPPPPPPNEISPPHAVEEEEDDDWGEDTTEEAQRRRMDEISDHAKGLTLSDDLERTVEERVNILFDFVKKKKEEGIIDSSDKEIVAEAERLDVKAMGPLVLTEVLFDEKIREQIKKYRRHFLRFCHNNKKAQRYLLHGLECVVAMHQAQLISKIPHILKEMYDADLLEEEVIISWSEKASKKYVSKELAKEIRVKAEPFIKWLKEAEEESSGGEEEDEDENIEVVYSKTASVPKVETVKSDNKDDDIDIDAI</sequence>
<organism>
    <name type="scientific">Mus musculus</name>
    <name type="common">Mouse</name>
    <dbReference type="NCBI Taxonomy" id="10090"/>
    <lineage>
        <taxon>Eukaryota</taxon>
        <taxon>Metazoa</taxon>
        <taxon>Chordata</taxon>
        <taxon>Craniata</taxon>
        <taxon>Vertebrata</taxon>
        <taxon>Euteleostomi</taxon>
        <taxon>Mammalia</taxon>
        <taxon>Eutheria</taxon>
        <taxon>Euarchontoglires</taxon>
        <taxon>Glires</taxon>
        <taxon>Rodentia</taxon>
        <taxon>Myomorpha</taxon>
        <taxon>Muroidea</taxon>
        <taxon>Muridae</taxon>
        <taxon>Murinae</taxon>
        <taxon>Mus</taxon>
        <taxon>Mus</taxon>
    </lineage>
</organism>
<reference key="1">
    <citation type="journal article" date="2004" name="Genome Res.">
        <title>The status, quality, and expansion of the NIH full-length cDNA project: the Mammalian Gene Collection (MGC).</title>
        <authorList>
            <consortium name="The MGC Project Team"/>
        </authorList>
    </citation>
    <scope>NUCLEOTIDE SEQUENCE [LARGE SCALE MRNA]</scope>
    <source>
        <strain>C57BL/6J</strain>
        <strain>FVB/N</strain>
        <tissue>Colon</tissue>
        <tissue>Eye</tissue>
    </source>
</reference>
<reference key="2">
    <citation type="journal article" date="2004" name="Mol. Cell. Proteomics">
        <title>Phosphoproteomic analysis of the developing mouse brain.</title>
        <authorList>
            <person name="Ballif B.A."/>
            <person name="Villen J."/>
            <person name="Beausoleil S.A."/>
            <person name="Schwartz D."/>
            <person name="Gygi S.P."/>
        </authorList>
    </citation>
    <scope>IDENTIFICATION BY MASS SPECTROMETRY [LARGE SCALE ANALYSIS]</scope>
    <source>
        <tissue>Embryonic brain</tissue>
    </source>
</reference>
<reference key="3">
    <citation type="journal article" date="2007" name="Proc. Natl. Acad. Sci. U.S.A.">
        <title>Large-scale phosphorylation analysis of mouse liver.</title>
        <authorList>
            <person name="Villen J."/>
            <person name="Beausoleil S.A."/>
            <person name="Gerber S.A."/>
            <person name="Gygi S.P."/>
        </authorList>
    </citation>
    <scope>PHOSPHORYLATION [LARGE SCALE ANALYSIS] AT SER-387; SER-388 AND SER-417</scope>
    <scope>IDENTIFICATION BY MASS SPECTROMETRY [LARGE SCALE ANALYSIS]</scope>
    <source>
        <tissue>Liver</tissue>
    </source>
</reference>
<reference key="4">
    <citation type="journal article" date="2010" name="Cell">
        <title>A tissue-specific atlas of mouse protein phosphorylation and expression.</title>
        <authorList>
            <person name="Huttlin E.L."/>
            <person name="Jedrychowski M.P."/>
            <person name="Elias J.E."/>
            <person name="Goswami T."/>
            <person name="Rad R."/>
            <person name="Beausoleil S.A."/>
            <person name="Villen J."/>
            <person name="Haas W."/>
            <person name="Sowa M.E."/>
            <person name="Gygi S.P."/>
        </authorList>
    </citation>
    <scope>PHOSPHORYLATION [LARGE SCALE ANALYSIS] AT SER-227; SER-387 AND SER-388</scope>
    <scope>IDENTIFICATION BY MASS SPECTROMETRY [LARGE SCALE ANALYSIS]</scope>
    <source>
        <tissue>Brain</tissue>
        <tissue>Brown adipose tissue</tissue>
        <tissue>Heart</tissue>
        <tissue>Kidney</tissue>
        <tissue>Liver</tissue>
        <tissue>Lung</tissue>
        <tissue>Pancreas</tissue>
        <tissue>Spleen</tissue>
        <tissue>Testis</tissue>
    </source>
</reference>